<sequence length="347" mass="38605">MRPILLSGHERSLTQVKFNREGDLLFSVAKDPIINAWFSHNGERLGTYEGHNGTVWTVDVDSTSTLLVSGSADNQMRLWEVATGKCLFTWEFTTAAKRVAFSEDCSQVLVVTEQRMGFRGSLRVFRINRDPATWTQQDVEPTRTITFSGPKAVVAAFAPCDQYIVTGHEDGKVAIYYHDDKEPESGIDAELEENSTKAHTDVISDLQMSADRTYFVTSSRDKTSKLIDSKTLQVIKTYATETPLNSASIHPTKPFVIVGGGQDAMNVTTTSARQGRFETRFWHKVFEEECARLPGHFGPINTIAIHPAGIAYASGGEDGYVRVNWFDPGFFNSKLYGADLELALEDQ</sequence>
<feature type="chain" id="PRO_0000419434" description="Eukaryotic translation initiation factor 3 subunit I">
    <location>
        <begin position="1"/>
        <end position="347"/>
    </location>
</feature>
<feature type="repeat" description="WD 1">
    <location>
        <begin position="8"/>
        <end position="49"/>
    </location>
</feature>
<feature type="repeat" description="WD 2">
    <location>
        <begin position="50"/>
        <end position="89"/>
    </location>
</feature>
<feature type="repeat" description="WD 3">
    <location>
        <begin position="146"/>
        <end position="186"/>
    </location>
</feature>
<feature type="repeat" description="WD 4">
    <location>
        <begin position="198"/>
        <end position="237"/>
    </location>
</feature>
<feature type="repeat" description="WD 5">
    <location>
        <begin position="239"/>
        <end position="278"/>
    </location>
</feature>
<feature type="repeat" description="WD 6">
    <location>
        <begin position="295"/>
        <end position="336"/>
    </location>
</feature>
<keyword id="KW-0963">Cytoplasm</keyword>
<keyword id="KW-0396">Initiation factor</keyword>
<keyword id="KW-0648">Protein biosynthesis</keyword>
<keyword id="KW-1185">Reference proteome</keyword>
<keyword id="KW-0677">Repeat</keyword>
<keyword id="KW-0853">WD repeat</keyword>
<name>EIF3I_MYCMD</name>
<evidence type="ECO:0000255" key="1">
    <source>
        <dbReference type="HAMAP-Rule" id="MF_03008"/>
    </source>
</evidence>
<dbReference type="EMBL" id="CM003153">
    <property type="protein sequence ID" value="KIS67215.1"/>
    <property type="molecule type" value="Genomic_DNA"/>
</dbReference>
<dbReference type="RefSeq" id="XP_011391197.1">
    <property type="nucleotide sequence ID" value="XM_011392895.1"/>
</dbReference>
<dbReference type="SMR" id="Q4P6E2"/>
<dbReference type="FunCoup" id="Q4P6E2">
    <property type="interactions" value="516"/>
</dbReference>
<dbReference type="STRING" id="237631.Q4P6E2"/>
<dbReference type="EnsemblFungi" id="KIS67215">
    <property type="protein sequence ID" value="KIS67215"/>
    <property type="gene ID" value="UMAG_11749"/>
</dbReference>
<dbReference type="GeneID" id="23567598"/>
<dbReference type="KEGG" id="uma:UMAG_11749"/>
<dbReference type="VEuPathDB" id="FungiDB:UMAG_11749"/>
<dbReference type="HOGENOM" id="CLU_043845_0_1_1"/>
<dbReference type="InParanoid" id="Q4P6E2"/>
<dbReference type="OrthoDB" id="24966at2759"/>
<dbReference type="Proteomes" id="UP000000561">
    <property type="component" value="Chromosome 14"/>
</dbReference>
<dbReference type="GO" id="GO:0016282">
    <property type="term" value="C:eukaryotic 43S preinitiation complex"/>
    <property type="evidence" value="ECO:0007669"/>
    <property type="project" value="UniProtKB-UniRule"/>
</dbReference>
<dbReference type="GO" id="GO:0033290">
    <property type="term" value="C:eukaryotic 48S preinitiation complex"/>
    <property type="evidence" value="ECO:0007669"/>
    <property type="project" value="UniProtKB-UniRule"/>
</dbReference>
<dbReference type="GO" id="GO:0071540">
    <property type="term" value="C:eukaryotic translation initiation factor 3 complex, eIF3e"/>
    <property type="evidence" value="ECO:0007669"/>
    <property type="project" value="EnsemblFungi"/>
</dbReference>
<dbReference type="GO" id="GO:0071541">
    <property type="term" value="C:eukaryotic translation initiation factor 3 complex, eIF3m"/>
    <property type="evidence" value="ECO:0000318"/>
    <property type="project" value="GO_Central"/>
</dbReference>
<dbReference type="GO" id="GO:0034399">
    <property type="term" value="C:nuclear periphery"/>
    <property type="evidence" value="ECO:0007669"/>
    <property type="project" value="EnsemblFungi"/>
</dbReference>
<dbReference type="GO" id="GO:0003723">
    <property type="term" value="F:RNA binding"/>
    <property type="evidence" value="ECO:0000318"/>
    <property type="project" value="GO_Central"/>
</dbReference>
<dbReference type="GO" id="GO:0003743">
    <property type="term" value="F:translation initiation factor activity"/>
    <property type="evidence" value="ECO:0000318"/>
    <property type="project" value="GO_Central"/>
</dbReference>
<dbReference type="GO" id="GO:0002183">
    <property type="term" value="P:cytoplasmic translational initiation"/>
    <property type="evidence" value="ECO:0000318"/>
    <property type="project" value="GO_Central"/>
</dbReference>
<dbReference type="GO" id="GO:0001732">
    <property type="term" value="P:formation of cytoplasmic translation initiation complex"/>
    <property type="evidence" value="ECO:0007669"/>
    <property type="project" value="UniProtKB-UniRule"/>
</dbReference>
<dbReference type="Gene3D" id="2.130.10.10">
    <property type="entry name" value="YVTN repeat-like/Quinoprotein amine dehydrogenase"/>
    <property type="match status" value="1"/>
</dbReference>
<dbReference type="HAMAP" id="MF_03008">
    <property type="entry name" value="eIF3i"/>
    <property type="match status" value="1"/>
</dbReference>
<dbReference type="InterPro" id="IPR027525">
    <property type="entry name" value="eIF3i"/>
</dbReference>
<dbReference type="InterPro" id="IPR015943">
    <property type="entry name" value="WD40/YVTN_repeat-like_dom_sf"/>
</dbReference>
<dbReference type="InterPro" id="IPR019775">
    <property type="entry name" value="WD40_repeat_CS"/>
</dbReference>
<dbReference type="InterPro" id="IPR036322">
    <property type="entry name" value="WD40_repeat_dom_sf"/>
</dbReference>
<dbReference type="InterPro" id="IPR001680">
    <property type="entry name" value="WD40_rpt"/>
</dbReference>
<dbReference type="PANTHER" id="PTHR19877">
    <property type="entry name" value="EUKARYOTIC TRANSLATION INITIATION FACTOR 3 SUBUNIT I"/>
    <property type="match status" value="1"/>
</dbReference>
<dbReference type="PANTHER" id="PTHR19877:SF1">
    <property type="entry name" value="EUKARYOTIC TRANSLATION INITIATION FACTOR 3 SUBUNIT I"/>
    <property type="match status" value="1"/>
</dbReference>
<dbReference type="Pfam" id="PF24805">
    <property type="entry name" value="EIF3I"/>
    <property type="match status" value="1"/>
</dbReference>
<dbReference type="SMART" id="SM00320">
    <property type="entry name" value="WD40"/>
    <property type="match status" value="7"/>
</dbReference>
<dbReference type="SUPFAM" id="SSF50978">
    <property type="entry name" value="WD40 repeat-like"/>
    <property type="match status" value="1"/>
</dbReference>
<dbReference type="PROSITE" id="PS00678">
    <property type="entry name" value="WD_REPEATS_1"/>
    <property type="match status" value="1"/>
</dbReference>
<dbReference type="PROSITE" id="PS50082">
    <property type="entry name" value="WD_REPEATS_2"/>
    <property type="match status" value="4"/>
</dbReference>
<dbReference type="PROSITE" id="PS50294">
    <property type="entry name" value="WD_REPEATS_REGION"/>
    <property type="match status" value="2"/>
</dbReference>
<proteinExistence type="inferred from homology"/>
<organism>
    <name type="scientific">Mycosarcoma maydis</name>
    <name type="common">Corn smut fungus</name>
    <name type="synonym">Ustilago maydis</name>
    <dbReference type="NCBI Taxonomy" id="5270"/>
    <lineage>
        <taxon>Eukaryota</taxon>
        <taxon>Fungi</taxon>
        <taxon>Dikarya</taxon>
        <taxon>Basidiomycota</taxon>
        <taxon>Ustilaginomycotina</taxon>
        <taxon>Ustilaginomycetes</taxon>
        <taxon>Ustilaginales</taxon>
        <taxon>Ustilaginaceae</taxon>
        <taxon>Mycosarcoma</taxon>
    </lineage>
</organism>
<accession>Q4P6E2</accession>
<accession>A0A0D1DXH8</accession>
<gene>
    <name evidence="1" type="primary">TIF34</name>
    <name type="ORF">UMAG_11749</name>
</gene>
<reference key="1">
    <citation type="journal article" date="2006" name="Nature">
        <title>Insights from the genome of the biotrophic fungal plant pathogen Ustilago maydis.</title>
        <authorList>
            <person name="Kaemper J."/>
            <person name="Kahmann R."/>
            <person name="Boelker M."/>
            <person name="Ma L.-J."/>
            <person name="Brefort T."/>
            <person name="Saville B.J."/>
            <person name="Banuett F."/>
            <person name="Kronstad J.W."/>
            <person name="Gold S.E."/>
            <person name="Mueller O."/>
            <person name="Perlin M.H."/>
            <person name="Woesten H.A.B."/>
            <person name="de Vries R."/>
            <person name="Ruiz-Herrera J."/>
            <person name="Reynaga-Pena C.G."/>
            <person name="Snetselaar K."/>
            <person name="McCann M."/>
            <person name="Perez-Martin J."/>
            <person name="Feldbruegge M."/>
            <person name="Basse C.W."/>
            <person name="Steinberg G."/>
            <person name="Ibeas J.I."/>
            <person name="Holloman W."/>
            <person name="Guzman P."/>
            <person name="Farman M.L."/>
            <person name="Stajich J.E."/>
            <person name="Sentandreu R."/>
            <person name="Gonzalez-Prieto J.M."/>
            <person name="Kennell J.C."/>
            <person name="Molina L."/>
            <person name="Schirawski J."/>
            <person name="Mendoza-Mendoza A."/>
            <person name="Greilinger D."/>
            <person name="Muench K."/>
            <person name="Roessel N."/>
            <person name="Scherer M."/>
            <person name="Vranes M."/>
            <person name="Ladendorf O."/>
            <person name="Vincon V."/>
            <person name="Fuchs U."/>
            <person name="Sandrock B."/>
            <person name="Meng S."/>
            <person name="Ho E.C.H."/>
            <person name="Cahill M.J."/>
            <person name="Boyce K.J."/>
            <person name="Klose J."/>
            <person name="Klosterman S.J."/>
            <person name="Deelstra H.J."/>
            <person name="Ortiz-Castellanos L."/>
            <person name="Li W."/>
            <person name="Sanchez-Alonso P."/>
            <person name="Schreier P.H."/>
            <person name="Haeuser-Hahn I."/>
            <person name="Vaupel M."/>
            <person name="Koopmann E."/>
            <person name="Friedrich G."/>
            <person name="Voss H."/>
            <person name="Schlueter T."/>
            <person name="Margolis J."/>
            <person name="Platt D."/>
            <person name="Swimmer C."/>
            <person name="Gnirke A."/>
            <person name="Chen F."/>
            <person name="Vysotskaia V."/>
            <person name="Mannhaupt G."/>
            <person name="Gueldener U."/>
            <person name="Muensterkoetter M."/>
            <person name="Haase D."/>
            <person name="Oesterheld M."/>
            <person name="Mewes H.-W."/>
            <person name="Mauceli E.W."/>
            <person name="DeCaprio D."/>
            <person name="Wade C.M."/>
            <person name="Butler J."/>
            <person name="Young S.K."/>
            <person name="Jaffe D.B."/>
            <person name="Calvo S.E."/>
            <person name="Nusbaum C."/>
            <person name="Galagan J.E."/>
            <person name="Birren B.W."/>
        </authorList>
    </citation>
    <scope>NUCLEOTIDE SEQUENCE [LARGE SCALE GENOMIC DNA]</scope>
    <source>
        <strain>DSM 14603 / FGSC 9021 / UM521</strain>
    </source>
</reference>
<reference key="2">
    <citation type="submission" date="2014-09" db="EMBL/GenBank/DDBJ databases">
        <authorList>
            <person name="Gueldener U."/>
            <person name="Muensterkoetter M."/>
            <person name="Walter M.C."/>
            <person name="Mannhaupt G."/>
            <person name="Kahmann R."/>
        </authorList>
    </citation>
    <scope>GENOME REANNOTATION</scope>
    <source>
        <strain>DSM 14603 / FGSC 9021 / UM521</strain>
    </source>
</reference>
<protein>
    <recommendedName>
        <fullName evidence="1">Eukaryotic translation initiation factor 3 subunit I</fullName>
        <shortName evidence="1">eIF3i</shortName>
    </recommendedName>
    <alternativeName>
        <fullName evidence="1">Eukaryotic translation initiation factor 3 39 kDa subunit homolog</fullName>
        <shortName evidence="1">eIF-3 39 kDa subunit homolog</shortName>
    </alternativeName>
</protein>
<comment type="function">
    <text evidence="1">Component of the eukaryotic translation initiation factor 3 (eIF-3) complex, which is involved in protein synthesis of a specialized repertoire of mRNAs and, together with other initiation factors, stimulates binding of mRNA and methionyl-tRNAi to the 40S ribosome. The eIF-3 complex specifically targets and initiates translation of a subset of mRNAs involved in cell proliferation.</text>
</comment>
<comment type="subunit">
    <text evidence="1">Component of the eukaryotic translation initiation factor 3 (eIF-3) complex.</text>
</comment>
<comment type="subcellular location">
    <subcellularLocation>
        <location evidence="1">Cytoplasm</location>
    </subcellularLocation>
</comment>
<comment type="similarity">
    <text evidence="1">Belongs to the eIF-3 subunit I family.</text>
</comment>